<organism>
    <name type="scientific">Macaca mulatta</name>
    <name type="common">Rhesus macaque</name>
    <dbReference type="NCBI Taxonomy" id="9544"/>
    <lineage>
        <taxon>Eukaryota</taxon>
        <taxon>Metazoa</taxon>
        <taxon>Chordata</taxon>
        <taxon>Craniata</taxon>
        <taxon>Vertebrata</taxon>
        <taxon>Euteleostomi</taxon>
        <taxon>Mammalia</taxon>
        <taxon>Eutheria</taxon>
        <taxon>Euarchontoglires</taxon>
        <taxon>Primates</taxon>
        <taxon>Haplorrhini</taxon>
        <taxon>Catarrhini</taxon>
        <taxon>Cercopithecidae</taxon>
        <taxon>Cercopithecinae</taxon>
        <taxon>Macaca</taxon>
    </lineage>
</organism>
<keyword id="KW-0007">Acetylation</keyword>
<keyword id="KW-0143">Chaperone</keyword>
<keyword id="KW-0963">Cytoplasm</keyword>
<keyword id="KW-0903">Direct protein sequencing</keyword>
<keyword id="KW-0273">Eye lens protein</keyword>
<keyword id="KW-0325">Glycoprotein</keyword>
<keyword id="KW-0479">Metal-binding</keyword>
<keyword id="KW-0488">Methylation</keyword>
<keyword id="KW-0539">Nucleus</keyword>
<keyword id="KW-0597">Phosphoprotein</keyword>
<keyword id="KW-1185">Reference proteome</keyword>
<keyword id="KW-0862">Zinc</keyword>
<gene>
    <name type="primary">CRYAA</name>
</gene>
<feature type="chain" id="PRO_0000125867" description="Alpha-crystallin A chain">
    <location>
        <begin position="1"/>
        <end position="172"/>
    </location>
</feature>
<feature type="domain" description="sHSP" evidence="4">
    <location>
        <begin position="52"/>
        <end position="163"/>
    </location>
</feature>
<feature type="region of interest" description="Required for complex formation with BFSP1 and BFSP2" evidence="3">
    <location>
        <begin position="1"/>
        <end position="63"/>
    </location>
</feature>
<feature type="binding site" evidence="2">
    <location>
        <position position="100"/>
    </location>
    <ligand>
        <name>Zn(2+)</name>
        <dbReference type="ChEBI" id="CHEBI:29105"/>
        <label>1</label>
    </ligand>
</feature>
<feature type="binding site" evidence="2">
    <location>
        <position position="102"/>
    </location>
    <ligand>
        <name>Zn(2+)</name>
        <dbReference type="ChEBI" id="CHEBI:29105"/>
        <label>1</label>
    </ligand>
</feature>
<feature type="binding site" evidence="2">
    <location>
        <position position="107"/>
    </location>
    <ligand>
        <name>Zn(2+)</name>
        <dbReference type="ChEBI" id="CHEBI:29105"/>
        <label>2</label>
    </ligand>
</feature>
<feature type="binding site" evidence="2">
    <location>
        <position position="154"/>
    </location>
    <ligand>
        <name>Zn(2+)</name>
        <dbReference type="ChEBI" id="CHEBI:29105"/>
        <label>3</label>
    </ligand>
</feature>
<feature type="modified residue" description="N-acetylmethionine" evidence="6">
    <location>
        <position position="1"/>
    </location>
</feature>
<feature type="modified residue" description="Deamidated glutamine; partial" evidence="1">
    <location>
        <position position="6"/>
    </location>
</feature>
<feature type="modified residue" description="Phosphoserine" evidence="3">
    <location>
        <position position="45"/>
    </location>
</feature>
<feature type="modified residue" description="Deamidated glutamine; partial" evidence="1">
    <location>
        <position position="50"/>
    </location>
</feature>
<feature type="modified residue" description="N6-acetyllysine" evidence="3">
    <location>
        <position position="70"/>
    </location>
</feature>
<feature type="modified residue" description="Deamidated glutamine; partial" evidence="1">
    <location>
        <position position="90"/>
    </location>
</feature>
<feature type="modified residue" description="N6-acetyllysine" evidence="3">
    <location>
        <position position="99"/>
    </location>
</feature>
<feature type="modified residue" description="Deamidated asparagine; partial" evidence="1">
    <location>
        <position position="101"/>
    </location>
</feature>
<feature type="modified residue" description="Phosphoserine" evidence="2">
    <location>
        <position position="122"/>
    </location>
</feature>
<feature type="modified residue" description="Deamidated asparagine; partial" evidence="1">
    <location>
        <position position="123"/>
    </location>
</feature>
<feature type="modified residue" description="Deamidated glutamine; partial" evidence="1">
    <location>
        <position position="147"/>
    </location>
</feature>
<feature type="glycosylation site" description="O-linked (GlcNAc) serine" evidence="5">
    <location>
        <position position="168"/>
    </location>
</feature>
<feature type="sequence conflict" description="In Ref. 1; AA sequence." evidence="7" ref="1">
    <original>TH</original>
    <variation>HT</variation>
    <location>
        <begin position="153"/>
        <end position="154"/>
    </location>
</feature>
<sequence>MDVTIQHPWFKRTLGPFYPSRLFDQFFGEGLFEYDLLPFLSSTISPYYRQSLFRTVLDSGISEVRSDRDKFVIFLDVKHFSPEDLTVKVQDDFVEIHGKHNERQDDHGYISREFHRRYRLPSNVDQSALSCSLSADGMLTFSGPKIQTGLDATHERAIPVAREEKPSSAPSS</sequence>
<protein>
    <recommendedName>
        <fullName>Alpha-crystallin A chain</fullName>
    </recommendedName>
</protein>
<name>CRYAA_MACMU</name>
<comment type="function">
    <text evidence="3">Contributes to the transparency and refractive index of the lens. Acts as a chaperone, preventing aggregation of various proteins under a wide range of stress conditions. Required for the correct formation of lens intermediate filaments as part of a complex composed of BFSP1, BFSP2 and CRYAA.</text>
</comment>
<comment type="subunit">
    <text evidence="2 3">Heteromer composed of three CRYAA and one CRYAB subunits. Inter-subunit bridging via zinc ions enhances stability, which is crucial as there is no protein turn over in the lens. Can also form homodimers and homotetramers (dimers of dimers) which serve as the building blocks of homooligomers. Within homooligomers, the zinc-binding motif is created from residues of 3 different molecules. His-100 and Glu-102 from one molecule are ligands of the zinc ion, and His-107 and His-154 residues from additional molecules complete the site with tetrahedral coordination geometry (By similarity). Part of a complex required for lens intermediate filament formation composed of BFSP1, BFSP2 and CRYAA.</text>
</comment>
<comment type="subcellular location">
    <subcellularLocation>
        <location evidence="3">Cytoplasm</location>
    </subcellularLocation>
    <subcellularLocation>
        <location evidence="3">Nucleus</location>
    </subcellularLocation>
    <text evidence="3">Translocates to the nucleus during heat shock and resides in sub-nuclear structures known as SC35 speckles or nuclear splicing speckles.</text>
</comment>
<comment type="PTM">
    <text evidence="3">Acetylation at Lys-70 may increase chaperone activity.</text>
</comment>
<comment type="PTM">
    <text evidence="3">Undergoes age-dependent proteolytical cleavage at the C-terminus.</text>
</comment>
<comment type="similarity">
    <text evidence="4">Belongs to the small heat shock protein (HSP20) family.</text>
</comment>
<accession>P02488</accession>
<reference key="1">
    <citation type="journal article" date="1975" name="Eur. J. Biochem.">
        <title>Primary structures of the alpha-crystallin A chains of seven mammalian species.</title>
        <authorList>
            <person name="de Jong W.W."/>
            <person name="van der Ouderaa F.J."/>
            <person name="Versteeg M."/>
            <person name="Groenewoud G."/>
            <person name="van Amelsvoort J.M."/>
            <person name="Bloemendal H."/>
        </authorList>
    </citation>
    <scope>PROTEIN SEQUENCE OF 2-6; 89-96 AND 146-162</scope>
    <scope>ACETYLATION AT MET-1</scope>
</reference>
<reference key="2">
    <citation type="journal article" date="1995" name="J. Mol. Evol.">
        <title>A reassessment of mammalian alpha A-crystallin sequences using DNA sequencing: implications for anthropoid affinities of tarsier.</title>
        <authorList>
            <person name="Jaworski C.J."/>
        </authorList>
    </citation>
    <scope>NUCLEOTIDE SEQUENCE [GENOMIC DNA] OF 122-162</scope>
</reference>
<reference key="3">
    <citation type="journal article" date="1996" name="Biochemistry">
        <title>Dynamic O-GlcNAcylation of the small heat shock protein alpha B-crystallin.</title>
        <authorList>
            <person name="Roquemore E.P."/>
            <person name="Chevrier M.R."/>
            <person name="Cotter R.J."/>
            <person name="Hart G.W."/>
        </authorList>
    </citation>
    <scope>GLYCOSYLATION AT SER-168</scope>
</reference>
<evidence type="ECO:0000250" key="1"/>
<evidence type="ECO:0000250" key="2">
    <source>
        <dbReference type="UniProtKB" id="P02470"/>
    </source>
</evidence>
<evidence type="ECO:0000250" key="3">
    <source>
        <dbReference type="UniProtKB" id="P02489"/>
    </source>
</evidence>
<evidence type="ECO:0000255" key="4">
    <source>
        <dbReference type="PROSITE-ProRule" id="PRU00285"/>
    </source>
</evidence>
<evidence type="ECO:0000269" key="5">
    <source>
    </source>
</evidence>
<evidence type="ECO:0000269" key="6">
    <source ref="1"/>
</evidence>
<evidence type="ECO:0000305" key="7"/>
<dbReference type="EMBL" id="U24061">
    <property type="protein sequence ID" value="AAA97563.1"/>
    <property type="molecule type" value="Genomic_DNA"/>
</dbReference>
<dbReference type="PIR" id="A02890">
    <property type="entry name" value="CYMQAA"/>
</dbReference>
<dbReference type="RefSeq" id="XP_014988287.1">
    <property type="nucleotide sequence ID" value="XM_015132801.2"/>
</dbReference>
<dbReference type="SMR" id="P02488"/>
<dbReference type="FunCoup" id="P02488">
    <property type="interactions" value="195"/>
</dbReference>
<dbReference type="STRING" id="9544.ENSMMUP00000026679"/>
<dbReference type="GlyConnect" id="31">
    <property type="glycosylation" value="1 O-GlcNAc glycan"/>
</dbReference>
<dbReference type="GlyCosmos" id="P02488">
    <property type="glycosylation" value="1 site, 1 glycan"/>
</dbReference>
<dbReference type="iPTMnet" id="P02488"/>
<dbReference type="PaxDb" id="9544-ENSMMUP00000026679"/>
<dbReference type="Ensembl" id="ENSMMUT00000028514.4">
    <property type="protein sequence ID" value="ENSMMUP00000026679.4"/>
    <property type="gene ID" value="ENSMMUG00000020271.4"/>
</dbReference>
<dbReference type="GeneID" id="722370"/>
<dbReference type="KEGG" id="mcc:722370"/>
<dbReference type="CTD" id="1409"/>
<dbReference type="VEuPathDB" id="HostDB:ENSMMUG00000020271"/>
<dbReference type="eggNOG" id="KOG3591">
    <property type="taxonomic scope" value="Eukaryota"/>
</dbReference>
<dbReference type="GeneTree" id="ENSGT00940000160159"/>
<dbReference type="HOGENOM" id="CLU_095001_5_0_1"/>
<dbReference type="InParanoid" id="P02488"/>
<dbReference type="OMA" id="QQDDHGY"/>
<dbReference type="OrthoDB" id="1431247at2759"/>
<dbReference type="Proteomes" id="UP000006718">
    <property type="component" value="Chromosome 3"/>
</dbReference>
<dbReference type="Bgee" id="ENSMMUG00000020271">
    <property type="expression patterns" value="Expressed in adult mammalian kidney and 10 other cell types or tissues"/>
</dbReference>
<dbReference type="GO" id="GO:0005737">
    <property type="term" value="C:cytoplasm"/>
    <property type="evidence" value="ECO:0000250"/>
    <property type="project" value="UniProtKB"/>
</dbReference>
<dbReference type="GO" id="GO:0005829">
    <property type="term" value="C:cytosol"/>
    <property type="evidence" value="ECO:0007669"/>
    <property type="project" value="Ensembl"/>
</dbReference>
<dbReference type="GO" id="GO:0005654">
    <property type="term" value="C:nucleoplasm"/>
    <property type="evidence" value="ECO:0007669"/>
    <property type="project" value="Ensembl"/>
</dbReference>
<dbReference type="GO" id="GO:0005634">
    <property type="term" value="C:nucleus"/>
    <property type="evidence" value="ECO:0000250"/>
    <property type="project" value="UniProtKB"/>
</dbReference>
<dbReference type="GO" id="GO:0032991">
    <property type="term" value="C:protein-containing complex"/>
    <property type="evidence" value="ECO:0007669"/>
    <property type="project" value="Ensembl"/>
</dbReference>
<dbReference type="GO" id="GO:0042802">
    <property type="term" value="F:identical protein binding"/>
    <property type="evidence" value="ECO:0007669"/>
    <property type="project" value="Ensembl"/>
</dbReference>
<dbReference type="GO" id="GO:0046872">
    <property type="term" value="F:metal ion binding"/>
    <property type="evidence" value="ECO:0007669"/>
    <property type="project" value="UniProtKB-KW"/>
</dbReference>
<dbReference type="GO" id="GO:0005212">
    <property type="term" value="F:structural constituent of eye lens"/>
    <property type="evidence" value="ECO:0007669"/>
    <property type="project" value="UniProtKB-KW"/>
</dbReference>
<dbReference type="GO" id="GO:0051082">
    <property type="term" value="F:unfolded protein binding"/>
    <property type="evidence" value="ECO:0000318"/>
    <property type="project" value="GO_Central"/>
</dbReference>
<dbReference type="GO" id="GO:0007015">
    <property type="term" value="P:actin filament organization"/>
    <property type="evidence" value="ECO:0007669"/>
    <property type="project" value="Ensembl"/>
</dbReference>
<dbReference type="GO" id="GO:0060561">
    <property type="term" value="P:apoptotic process involved in morphogenesis"/>
    <property type="evidence" value="ECO:0007669"/>
    <property type="project" value="Ensembl"/>
</dbReference>
<dbReference type="GO" id="GO:0048596">
    <property type="term" value="P:embryonic camera-type eye morphogenesis"/>
    <property type="evidence" value="ECO:0007669"/>
    <property type="project" value="Ensembl"/>
</dbReference>
<dbReference type="GO" id="GO:0002088">
    <property type="term" value="P:lens development in camera-type eye"/>
    <property type="evidence" value="ECO:0000318"/>
    <property type="project" value="GO_Central"/>
</dbReference>
<dbReference type="GO" id="GO:0070309">
    <property type="term" value="P:lens fiber cell morphogenesis"/>
    <property type="evidence" value="ECO:0007669"/>
    <property type="project" value="Ensembl"/>
</dbReference>
<dbReference type="GO" id="GO:0007017">
    <property type="term" value="P:microtubule-based process"/>
    <property type="evidence" value="ECO:0007669"/>
    <property type="project" value="Ensembl"/>
</dbReference>
<dbReference type="GO" id="GO:0007005">
    <property type="term" value="P:mitochondrion organization"/>
    <property type="evidence" value="ECO:0007669"/>
    <property type="project" value="Ensembl"/>
</dbReference>
<dbReference type="GO" id="GO:0043066">
    <property type="term" value="P:negative regulation of apoptotic process"/>
    <property type="evidence" value="ECO:0000318"/>
    <property type="project" value="GO_Central"/>
</dbReference>
<dbReference type="GO" id="GO:0010629">
    <property type="term" value="P:negative regulation of gene expression"/>
    <property type="evidence" value="ECO:0007669"/>
    <property type="project" value="Ensembl"/>
</dbReference>
<dbReference type="GO" id="GO:0032387">
    <property type="term" value="P:negative regulation of intracellular transport"/>
    <property type="evidence" value="ECO:0007669"/>
    <property type="project" value="Ensembl"/>
</dbReference>
<dbReference type="GO" id="GO:0030307">
    <property type="term" value="P:positive regulation of cell growth"/>
    <property type="evidence" value="ECO:0007669"/>
    <property type="project" value="Ensembl"/>
</dbReference>
<dbReference type="GO" id="GO:0042026">
    <property type="term" value="P:protein refolding"/>
    <property type="evidence" value="ECO:0000318"/>
    <property type="project" value="GO_Central"/>
</dbReference>
<dbReference type="GO" id="GO:0050821">
    <property type="term" value="P:protein stabilization"/>
    <property type="evidence" value="ECO:0007669"/>
    <property type="project" value="Ensembl"/>
</dbReference>
<dbReference type="GO" id="GO:0009408">
    <property type="term" value="P:response to heat"/>
    <property type="evidence" value="ECO:0000318"/>
    <property type="project" value="GO_Central"/>
</dbReference>
<dbReference type="GO" id="GO:0042542">
    <property type="term" value="P:response to hydrogen peroxide"/>
    <property type="evidence" value="ECO:0007669"/>
    <property type="project" value="Ensembl"/>
</dbReference>
<dbReference type="GO" id="GO:0001666">
    <property type="term" value="P:response to hypoxia"/>
    <property type="evidence" value="ECO:0007669"/>
    <property type="project" value="Ensembl"/>
</dbReference>
<dbReference type="GO" id="GO:0070141">
    <property type="term" value="P:response to UV-A"/>
    <property type="evidence" value="ECO:0007669"/>
    <property type="project" value="Ensembl"/>
</dbReference>
<dbReference type="GO" id="GO:0007021">
    <property type="term" value="P:tubulin complex assembly"/>
    <property type="evidence" value="ECO:0007669"/>
    <property type="project" value="Ensembl"/>
</dbReference>
<dbReference type="GO" id="GO:0007601">
    <property type="term" value="P:visual perception"/>
    <property type="evidence" value="ECO:0007669"/>
    <property type="project" value="Ensembl"/>
</dbReference>
<dbReference type="CDD" id="cd06497">
    <property type="entry name" value="ACD_alphaA-crystallin_HspB4"/>
    <property type="match status" value="1"/>
</dbReference>
<dbReference type="FunFam" id="2.60.40.790:FF:000008">
    <property type="entry name" value="Alpha-crystallin A chain"/>
    <property type="match status" value="1"/>
</dbReference>
<dbReference type="Gene3D" id="2.60.40.790">
    <property type="match status" value="1"/>
</dbReference>
<dbReference type="InterPro" id="IPR002068">
    <property type="entry name" value="A-crystallin/Hsp20_dom"/>
</dbReference>
<dbReference type="InterPro" id="IPR055269">
    <property type="entry name" value="Alpha-crystallin/HSP_16"/>
</dbReference>
<dbReference type="InterPro" id="IPR001436">
    <property type="entry name" value="Alpha-crystallin/sHSP_animal"/>
</dbReference>
<dbReference type="InterPro" id="IPR003090">
    <property type="entry name" value="Alpha-crystallin_N"/>
</dbReference>
<dbReference type="InterPro" id="IPR008978">
    <property type="entry name" value="HSP20-like_chaperone"/>
</dbReference>
<dbReference type="PANTHER" id="PTHR45640:SF14">
    <property type="entry name" value="ALPHA-CRYSTALLIN A CHAIN"/>
    <property type="match status" value="1"/>
</dbReference>
<dbReference type="PANTHER" id="PTHR45640">
    <property type="entry name" value="HEAT SHOCK PROTEIN HSP-12.2-RELATED"/>
    <property type="match status" value="1"/>
</dbReference>
<dbReference type="Pfam" id="PF00525">
    <property type="entry name" value="Crystallin"/>
    <property type="match status" value="1"/>
</dbReference>
<dbReference type="Pfam" id="PF00011">
    <property type="entry name" value="HSP20"/>
    <property type="match status" value="1"/>
</dbReference>
<dbReference type="PIRSF" id="PIRSF036514">
    <property type="entry name" value="Sm_HSP_B1"/>
    <property type="match status" value="1"/>
</dbReference>
<dbReference type="PRINTS" id="PR00299">
    <property type="entry name" value="ACRYSTALLIN"/>
</dbReference>
<dbReference type="SUPFAM" id="SSF49764">
    <property type="entry name" value="HSP20-like chaperones"/>
    <property type="match status" value="1"/>
</dbReference>
<dbReference type="PROSITE" id="PS01031">
    <property type="entry name" value="SHSP"/>
    <property type="match status" value="1"/>
</dbReference>
<proteinExistence type="evidence at protein level"/>